<proteinExistence type="inferred from homology"/>
<protein>
    <recommendedName>
        <fullName>Transcriptional regulator ModE</fullName>
    </recommendedName>
</protein>
<accession>P0A9H0</accession>
<accession>P46930</accession>
<organism>
    <name type="scientific">Shigella flexneri</name>
    <dbReference type="NCBI Taxonomy" id="623"/>
    <lineage>
        <taxon>Bacteria</taxon>
        <taxon>Pseudomonadati</taxon>
        <taxon>Pseudomonadota</taxon>
        <taxon>Gammaproteobacteria</taxon>
        <taxon>Enterobacterales</taxon>
        <taxon>Enterobacteriaceae</taxon>
        <taxon>Shigella</taxon>
    </lineage>
</organism>
<sequence>MQAEILLTLKLQQKLFADPRRISLLKHIALSGSISQGAKDAGISYKSAWDAINEMNQLSEHILVERATGGKGGGGAVLTRYGQRLIQLYDLLAQIQQKAFDVLSDDDALPLNSLLAAISRFSLQTSARNQWFGTITARDHDDVQQHVDVLLADGKTRLKVAITAQSGARLGLDEGKEVLILLKAPWVGITQDEAVAQNADNQLPGIISHIERGAEQCEVLMALPDGQTLCATVPVNEATSLQQGQNVTAYFNADSVIIATLC</sequence>
<evidence type="ECO:0000250" key="1"/>
<evidence type="ECO:0000255" key="2">
    <source>
        <dbReference type="PROSITE-ProRule" id="PRU01213"/>
    </source>
</evidence>
<evidence type="ECO:0000305" key="3"/>
<reference key="1">
    <citation type="journal article" date="2002" name="Nucleic Acids Res.">
        <title>Genome sequence of Shigella flexneri 2a: insights into pathogenicity through comparison with genomes of Escherichia coli K12 and O157.</title>
        <authorList>
            <person name="Jin Q."/>
            <person name="Yuan Z."/>
            <person name="Xu J."/>
            <person name="Wang Y."/>
            <person name="Shen Y."/>
            <person name="Lu W."/>
            <person name="Wang J."/>
            <person name="Liu H."/>
            <person name="Yang J."/>
            <person name="Yang F."/>
            <person name="Zhang X."/>
            <person name="Zhang J."/>
            <person name="Yang G."/>
            <person name="Wu H."/>
            <person name="Qu D."/>
            <person name="Dong J."/>
            <person name="Sun L."/>
            <person name="Xue Y."/>
            <person name="Zhao A."/>
            <person name="Gao Y."/>
            <person name="Zhu J."/>
            <person name="Kan B."/>
            <person name="Ding K."/>
            <person name="Chen S."/>
            <person name="Cheng H."/>
            <person name="Yao Z."/>
            <person name="He B."/>
            <person name="Chen R."/>
            <person name="Ma D."/>
            <person name="Qiang B."/>
            <person name="Wen Y."/>
            <person name="Hou Y."/>
            <person name="Yu J."/>
        </authorList>
    </citation>
    <scope>NUCLEOTIDE SEQUENCE [LARGE SCALE GENOMIC DNA]</scope>
    <source>
        <strain>301 / Serotype 2a</strain>
    </source>
</reference>
<reference key="2">
    <citation type="journal article" date="2003" name="Infect. Immun.">
        <title>Complete genome sequence and comparative genomics of Shigella flexneri serotype 2a strain 2457T.</title>
        <authorList>
            <person name="Wei J."/>
            <person name="Goldberg M.B."/>
            <person name="Burland V."/>
            <person name="Venkatesan M.M."/>
            <person name="Deng W."/>
            <person name="Fournier G."/>
            <person name="Mayhew G.F."/>
            <person name="Plunkett G. III"/>
            <person name="Rose D.J."/>
            <person name="Darling A."/>
            <person name="Mau B."/>
            <person name="Perna N.T."/>
            <person name="Payne S.M."/>
            <person name="Runyen-Janecky L.J."/>
            <person name="Zhou S."/>
            <person name="Schwartz D.C."/>
            <person name="Blattner F.R."/>
        </authorList>
    </citation>
    <scope>NUCLEOTIDE SEQUENCE [LARGE SCALE GENOMIC DNA]</scope>
    <source>
        <strain>ATCC 700930 / 2457T / Serotype 2a</strain>
    </source>
</reference>
<gene>
    <name type="primary">modE</name>
    <name type="ordered locus">SF0543</name>
    <name type="ordered locus">S0551</name>
</gene>
<feature type="chain" id="PRO_0000201128" description="Transcriptional regulator ModE">
    <location>
        <begin position="1"/>
        <end position="262"/>
    </location>
</feature>
<feature type="domain" description="Mop 1" evidence="2">
    <location>
        <begin position="124"/>
        <end position="191"/>
    </location>
</feature>
<feature type="domain" description="Mop 2" evidence="2">
    <location>
        <begin position="196"/>
        <end position="260"/>
    </location>
</feature>
<feature type="DNA-binding region" description="H-T-H motif" evidence="1">
    <location>
        <begin position="33"/>
        <end position="79"/>
    </location>
</feature>
<feature type="region of interest" description="I">
    <location>
        <begin position="1"/>
        <end position="121"/>
    </location>
</feature>
<feature type="region of interest" description="Required for dimer formation and molybdate binding" evidence="1">
    <location>
        <begin position="125"/>
        <end position="133"/>
    </location>
</feature>
<comment type="function">
    <text evidence="1">The ModE-Mo complex acts as a repressor of the modABC operon, involved in the transport of molybdate. Upon binding molybdate, the conformation of the protein changes, promoting dimerization of ModE-Mo. The protein dimer is then competent to bind a DNA region, upstream of the modABC operon. Also acts as an enhancer of the expression of genes coding for molybdoenzymes, both directly and indirectly (By similarity).</text>
</comment>
<comment type="subunit">
    <text evidence="1">Homodimer.</text>
</comment>
<comment type="subcellular location">
    <subcellularLocation>
        <location evidence="3">Cytoplasm</location>
    </subcellularLocation>
</comment>
<comment type="similarity">
    <text evidence="3">Belongs to the ModE family.</text>
</comment>
<name>MODE_SHIFL</name>
<dbReference type="EMBL" id="AE005674">
    <property type="protein sequence ID" value="AAN42187.1"/>
    <property type="molecule type" value="Genomic_DNA"/>
</dbReference>
<dbReference type="EMBL" id="AE014073">
    <property type="protein sequence ID" value="AAP16060.1"/>
    <property type="molecule type" value="Genomic_DNA"/>
</dbReference>
<dbReference type="RefSeq" id="NP_706480.1">
    <property type="nucleotide sequence ID" value="NC_004337.2"/>
</dbReference>
<dbReference type="RefSeq" id="WP_001147439.1">
    <property type="nucleotide sequence ID" value="NZ_WPGW01000046.1"/>
</dbReference>
<dbReference type="SMR" id="P0A9H0"/>
<dbReference type="STRING" id="198214.SF0543"/>
<dbReference type="PaxDb" id="198214-SF0543"/>
<dbReference type="GeneID" id="1023462"/>
<dbReference type="GeneID" id="75170760"/>
<dbReference type="KEGG" id="sfl:SF0543"/>
<dbReference type="KEGG" id="sfx:S0551"/>
<dbReference type="PATRIC" id="fig|198214.7.peg.632"/>
<dbReference type="HOGENOM" id="CLU_087839_0_0_6"/>
<dbReference type="Proteomes" id="UP000001006">
    <property type="component" value="Chromosome"/>
</dbReference>
<dbReference type="Proteomes" id="UP000002673">
    <property type="component" value="Chromosome"/>
</dbReference>
<dbReference type="GO" id="GO:0005737">
    <property type="term" value="C:cytoplasm"/>
    <property type="evidence" value="ECO:0007669"/>
    <property type="project" value="UniProtKB-SubCell"/>
</dbReference>
<dbReference type="GO" id="GO:0003677">
    <property type="term" value="F:DNA binding"/>
    <property type="evidence" value="ECO:0007669"/>
    <property type="project" value="UniProtKB-KW"/>
</dbReference>
<dbReference type="GO" id="GO:0030151">
    <property type="term" value="F:molybdenum ion binding"/>
    <property type="evidence" value="ECO:0007669"/>
    <property type="project" value="InterPro"/>
</dbReference>
<dbReference type="GO" id="GO:0015689">
    <property type="term" value="P:molybdate ion transport"/>
    <property type="evidence" value="ECO:0007669"/>
    <property type="project" value="InterPro"/>
</dbReference>
<dbReference type="GO" id="GO:0006355">
    <property type="term" value="P:regulation of DNA-templated transcription"/>
    <property type="evidence" value="ECO:0007669"/>
    <property type="project" value="InterPro"/>
</dbReference>
<dbReference type="FunFam" id="1.10.10.10:FF:000154">
    <property type="entry name" value="DNA-binding transcriptional regulator ModE"/>
    <property type="match status" value="1"/>
</dbReference>
<dbReference type="FunFam" id="2.40.50.100:FF:000021">
    <property type="entry name" value="DNA-binding transcriptional regulator ModE"/>
    <property type="match status" value="1"/>
</dbReference>
<dbReference type="Gene3D" id="2.40.50.100">
    <property type="match status" value="2"/>
</dbReference>
<dbReference type="Gene3D" id="1.10.10.10">
    <property type="entry name" value="Winged helix-like DNA-binding domain superfamily/Winged helix DNA-binding domain"/>
    <property type="match status" value="1"/>
</dbReference>
<dbReference type="InterPro" id="IPR008995">
    <property type="entry name" value="Mo/tungstate-bd_C_term_dom"/>
</dbReference>
<dbReference type="InterPro" id="IPR016462">
    <property type="entry name" value="ModE"/>
</dbReference>
<dbReference type="InterPro" id="IPR003725">
    <property type="entry name" value="ModE-bd_N"/>
</dbReference>
<dbReference type="InterPro" id="IPR051815">
    <property type="entry name" value="Molybdate_resp_trans_reg"/>
</dbReference>
<dbReference type="InterPro" id="IPR004606">
    <property type="entry name" value="Mop_domain"/>
</dbReference>
<dbReference type="InterPro" id="IPR005116">
    <property type="entry name" value="Transp-assoc_OB_typ1"/>
</dbReference>
<dbReference type="InterPro" id="IPR036388">
    <property type="entry name" value="WH-like_DNA-bd_sf"/>
</dbReference>
<dbReference type="InterPro" id="IPR036390">
    <property type="entry name" value="WH_DNA-bd_sf"/>
</dbReference>
<dbReference type="NCBIfam" id="TIGR00637">
    <property type="entry name" value="ModE_repress"/>
    <property type="match status" value="1"/>
</dbReference>
<dbReference type="NCBIfam" id="TIGR00638">
    <property type="entry name" value="Mop"/>
    <property type="match status" value="1"/>
</dbReference>
<dbReference type="NCBIfam" id="NF007957">
    <property type="entry name" value="PRK10676.1"/>
    <property type="match status" value="1"/>
</dbReference>
<dbReference type="PANTHER" id="PTHR30432:SF1">
    <property type="entry name" value="DNA-BINDING TRANSCRIPTIONAL DUAL REGULATOR MODE"/>
    <property type="match status" value="1"/>
</dbReference>
<dbReference type="PANTHER" id="PTHR30432">
    <property type="entry name" value="TRANSCRIPTIONAL REGULATOR MODE"/>
    <property type="match status" value="1"/>
</dbReference>
<dbReference type="Pfam" id="PF03459">
    <property type="entry name" value="TOBE"/>
    <property type="match status" value="2"/>
</dbReference>
<dbReference type="PIRSF" id="PIRSF005763">
    <property type="entry name" value="Txn_reg_ModE"/>
    <property type="match status" value="1"/>
</dbReference>
<dbReference type="SUPFAM" id="SSF50331">
    <property type="entry name" value="MOP-like"/>
    <property type="match status" value="2"/>
</dbReference>
<dbReference type="SUPFAM" id="SSF46785">
    <property type="entry name" value="Winged helix' DNA-binding domain"/>
    <property type="match status" value="1"/>
</dbReference>
<dbReference type="PROSITE" id="PS51866">
    <property type="entry name" value="MOP"/>
    <property type="match status" value="2"/>
</dbReference>
<keyword id="KW-0010">Activator</keyword>
<keyword id="KW-0963">Cytoplasm</keyword>
<keyword id="KW-0238">DNA-binding</keyword>
<keyword id="KW-0500">Molybdenum</keyword>
<keyword id="KW-1185">Reference proteome</keyword>
<keyword id="KW-0677">Repeat</keyword>
<keyword id="KW-0678">Repressor</keyword>
<keyword id="KW-0804">Transcription</keyword>
<keyword id="KW-0805">Transcription regulation</keyword>
<keyword id="KW-0813">Transport</keyword>